<protein>
    <recommendedName>
        <fullName>Probable lipoprotein CPn_0875/CP_0994/CPj0875/CpB0904</fullName>
    </recommendedName>
</protein>
<gene>
    <name type="ordered locus">CPn_0875</name>
    <name type="ordered locus">CP_0994</name>
    <name type="ordered locus">CPj0875</name>
    <name type="ordered locus">CpB0904</name>
</gene>
<reference key="1">
    <citation type="journal article" date="1999" name="Nat. Genet.">
        <title>Comparative genomes of Chlamydia pneumoniae and C. trachomatis.</title>
        <authorList>
            <person name="Kalman S."/>
            <person name="Mitchell W.P."/>
            <person name="Marathe R."/>
            <person name="Lammel C.J."/>
            <person name="Fan J."/>
            <person name="Hyman R.W."/>
            <person name="Olinger L."/>
            <person name="Grimwood J."/>
            <person name="Davis R.W."/>
            <person name="Stephens R.S."/>
        </authorList>
    </citation>
    <scope>NUCLEOTIDE SEQUENCE [LARGE SCALE GENOMIC DNA]</scope>
    <source>
        <strain>CWL029</strain>
    </source>
</reference>
<reference key="2">
    <citation type="journal article" date="2000" name="Nucleic Acids Res.">
        <title>Genome sequences of Chlamydia trachomatis MoPn and Chlamydia pneumoniae AR39.</title>
        <authorList>
            <person name="Read T.D."/>
            <person name="Brunham R.C."/>
            <person name="Shen C."/>
            <person name="Gill S.R."/>
            <person name="Heidelberg J.F."/>
            <person name="White O."/>
            <person name="Hickey E.K."/>
            <person name="Peterson J.D."/>
            <person name="Utterback T.R."/>
            <person name="Berry K.J."/>
            <person name="Bass S."/>
            <person name="Linher K.D."/>
            <person name="Weidman J.F."/>
            <person name="Khouri H.M."/>
            <person name="Craven B."/>
            <person name="Bowman C."/>
            <person name="Dodson R.J."/>
            <person name="Gwinn M.L."/>
            <person name="Nelson W.C."/>
            <person name="DeBoy R.T."/>
            <person name="Kolonay J.F."/>
            <person name="McClarty G."/>
            <person name="Salzberg S.L."/>
            <person name="Eisen J.A."/>
            <person name="Fraser C.M."/>
        </authorList>
    </citation>
    <scope>NUCLEOTIDE SEQUENCE [LARGE SCALE GENOMIC DNA]</scope>
    <source>
        <strain>AR39</strain>
    </source>
</reference>
<reference key="3">
    <citation type="journal article" date="2000" name="Nucleic Acids Res.">
        <title>Comparison of whole genome sequences of Chlamydia pneumoniae J138 from Japan and CWL029 from USA.</title>
        <authorList>
            <person name="Shirai M."/>
            <person name="Hirakawa H."/>
            <person name="Kimoto M."/>
            <person name="Tabuchi M."/>
            <person name="Kishi F."/>
            <person name="Ouchi K."/>
            <person name="Shiba T."/>
            <person name="Ishii K."/>
            <person name="Hattori M."/>
            <person name="Kuhara S."/>
            <person name="Nakazawa T."/>
        </authorList>
    </citation>
    <scope>NUCLEOTIDE SEQUENCE [LARGE SCALE GENOMIC DNA]</scope>
    <source>
        <strain>J138</strain>
    </source>
</reference>
<reference key="4">
    <citation type="submission" date="2002-05" db="EMBL/GenBank/DDBJ databases">
        <title>The genome sequence of Chlamydia pneumoniae TW183 and comparison with other Chlamydia strains based on whole genome sequence analysis.</title>
        <authorList>
            <person name="Geng M.M."/>
            <person name="Schuhmacher A."/>
            <person name="Muehldorfer I."/>
            <person name="Bensch K.W."/>
            <person name="Schaefer K.P."/>
            <person name="Schneider S."/>
            <person name="Pohl T."/>
            <person name="Essig A."/>
            <person name="Marre R."/>
            <person name="Melchers K."/>
        </authorList>
    </citation>
    <scope>NUCLEOTIDE SEQUENCE [LARGE SCALE GENOMIC DNA]</scope>
    <source>
        <strain>TW-183</strain>
    </source>
</reference>
<organism>
    <name type="scientific">Chlamydia pneumoniae</name>
    <name type="common">Chlamydophila pneumoniae</name>
    <dbReference type="NCBI Taxonomy" id="83558"/>
    <lineage>
        <taxon>Bacteria</taxon>
        <taxon>Pseudomonadati</taxon>
        <taxon>Chlamydiota</taxon>
        <taxon>Chlamydiia</taxon>
        <taxon>Chlamydiales</taxon>
        <taxon>Chlamydiaceae</taxon>
        <taxon>Chlamydia/Chlamydophila group</taxon>
        <taxon>Chlamydia</taxon>
    </lineage>
</organism>
<evidence type="ECO:0000255" key="1">
    <source>
        <dbReference type="PROSITE-ProRule" id="PRU00303"/>
    </source>
</evidence>
<evidence type="ECO:0000305" key="2"/>
<proteinExistence type="inferred from homology"/>
<sequence length="217" mass="24486">MKRVIYKTIFCGLTLLTSLSSCSLDPKGYNLETKNSRDLNQESVILKENRETPSLVKRLSRRSRRLFARRDQTQKDTLQVQANFKTYAEKISEQDERDLSFVVSSAAEKSSISLALSQGEIKDALYRIREVHPLALIEALAENPALIEGMKKMQGRDWIWNLFLTQLSEVFSQAWSQGVISEEDIAAFASTLGLDSGTVASIVQGERWPELVDIVIT</sequence>
<dbReference type="EMBL" id="AE001363">
    <property type="protein sequence ID" value="AAD19013.1"/>
    <property type="molecule type" value="Genomic_DNA"/>
</dbReference>
<dbReference type="EMBL" id="AE002161">
    <property type="protein sequence ID" value="AAF38772.1"/>
    <property type="molecule type" value="Genomic_DNA"/>
</dbReference>
<dbReference type="EMBL" id="BA000008">
    <property type="protein sequence ID" value="BAA99083.1"/>
    <property type="molecule type" value="Genomic_DNA"/>
</dbReference>
<dbReference type="EMBL" id="AE009440">
    <property type="protein sequence ID" value="AAP98833.1"/>
    <property type="molecule type" value="Genomic_DNA"/>
</dbReference>
<dbReference type="PIR" id="A72024">
    <property type="entry name" value="A72024"/>
</dbReference>
<dbReference type="PIR" id="A86600">
    <property type="entry name" value="A86600"/>
</dbReference>
<dbReference type="RefSeq" id="NP_225070.1">
    <property type="nucleotide sequence ID" value="NC_000922.1"/>
</dbReference>
<dbReference type="RefSeq" id="WP_010883510.1">
    <property type="nucleotide sequence ID" value="NZ_LN847257.1"/>
</dbReference>
<dbReference type="STRING" id="406984.CPK_ORF00282"/>
<dbReference type="GeneID" id="45050928"/>
<dbReference type="KEGG" id="cpa:CP_0994"/>
<dbReference type="KEGG" id="cpj:CPj0875"/>
<dbReference type="KEGG" id="cpn:CPn_0875"/>
<dbReference type="KEGG" id="cpt:CpB0904"/>
<dbReference type="PATRIC" id="fig|115713.3.peg.955"/>
<dbReference type="HOGENOM" id="CLU_1341277_0_0_0"/>
<dbReference type="OrthoDB" id="19114at2"/>
<dbReference type="Proteomes" id="UP000000583">
    <property type="component" value="Chromosome"/>
</dbReference>
<dbReference type="Proteomes" id="UP000000801">
    <property type="component" value="Chromosome"/>
</dbReference>
<dbReference type="GO" id="GO:0005886">
    <property type="term" value="C:plasma membrane"/>
    <property type="evidence" value="ECO:0007669"/>
    <property type="project" value="UniProtKB-SubCell"/>
</dbReference>
<dbReference type="PROSITE" id="PS51257">
    <property type="entry name" value="PROKAR_LIPOPROTEIN"/>
    <property type="match status" value="1"/>
</dbReference>
<name>Y875_CHLPN</name>
<comment type="subcellular location">
    <subcellularLocation>
        <location evidence="2">Cell membrane</location>
        <topology evidence="2">Lipid-anchor</topology>
    </subcellularLocation>
</comment>
<comment type="similarity">
    <text evidence="2">Belongs to the chlamydial CPn_0875/CT_734/TC_0107 family.</text>
</comment>
<feature type="signal peptide" evidence="1">
    <location>
        <begin position="1"/>
        <end position="21"/>
    </location>
</feature>
<feature type="chain" id="PRO_0000013758" description="Probable lipoprotein CPn_0875/CP_0994/CPj0875/CpB0904">
    <location>
        <begin position="22"/>
        <end position="217"/>
    </location>
</feature>
<feature type="lipid moiety-binding region" description="N-palmitoyl cysteine" evidence="1">
    <location>
        <position position="22"/>
    </location>
</feature>
<feature type="lipid moiety-binding region" description="S-diacylglycerol cysteine" evidence="1">
    <location>
        <position position="22"/>
    </location>
</feature>
<accession>Q9Z731</accession>
<keyword id="KW-1003">Cell membrane</keyword>
<keyword id="KW-0449">Lipoprotein</keyword>
<keyword id="KW-0472">Membrane</keyword>
<keyword id="KW-0564">Palmitate</keyword>
<keyword id="KW-0732">Signal</keyword>